<reference key="1">
    <citation type="journal article" date="1998" name="Science">
        <title>Genome sequence of the nematode C. elegans: a platform for investigating biology.</title>
        <authorList>
            <consortium name="The C. elegans sequencing consortium"/>
        </authorList>
    </citation>
    <scope>NUCLEOTIDE SEQUENCE [LARGE SCALE GENOMIC DNA]</scope>
    <source>
        <strain>Bristol N2</strain>
    </source>
</reference>
<reference key="2">
    <citation type="journal article" date="1994" name="Genomics">
        <title>Human mitochondrial HMG CoA synthase: liver cDNA and partial genomic cloning, chromosome mapping to 1p12-p13, and possible role in vertebrate evolution.</title>
        <authorList>
            <person name="Boukaftane Y."/>
            <person name="Duncan A."/>
            <person name="Wang S."/>
            <person name="Labuda D."/>
            <person name="Robert M.-F."/>
            <person name="Sarrazin J."/>
            <person name="Schappert K.T."/>
            <person name="Mitchell G.A."/>
        </authorList>
    </citation>
    <scope>NUCLEOTIDE SEQUENCE [MRNA] OF 5-462</scope>
</reference>
<reference key="3">
    <citation type="journal article" date="2014" name="Proc. Natl. Acad. Sci. U.S.A.">
        <title>Controlled sumoylation of the mevalonate pathway enzyme HMGS-1 regulates metabolism during aging.</title>
        <authorList>
            <person name="Sapir A."/>
            <person name="Tsur A."/>
            <person name="Koorman T."/>
            <person name="Ching K."/>
            <person name="Mishra P."/>
            <person name="Bardenheier A."/>
            <person name="Podolsky L."/>
            <person name="Bening-Abu-Shach U."/>
            <person name="Boxem M."/>
            <person name="Chou T.F."/>
            <person name="Broday L."/>
            <person name="Sternberg P.W."/>
        </authorList>
    </citation>
    <scope>SUMOYLATION</scope>
    <scope>UBIQUITINATION</scope>
    <scope>DISRUPTION PHENOTYPE</scope>
    <scope>MUTAGENESIS OF LYS-291; LYS-314; LYS-408 AND LYS-420</scope>
</reference>
<gene>
    <name evidence="6" type="primary">hmgs-1</name>
    <name evidence="6" type="ORF">F25B4.6</name>
</gene>
<accession>P54871</accession>
<accession>Q22962</accession>
<organism>
    <name type="scientific">Caenorhabditis elegans</name>
    <dbReference type="NCBI Taxonomy" id="6239"/>
    <lineage>
        <taxon>Eukaryota</taxon>
        <taxon>Metazoa</taxon>
        <taxon>Ecdysozoa</taxon>
        <taxon>Nematoda</taxon>
        <taxon>Chromadorea</taxon>
        <taxon>Rhabditida</taxon>
        <taxon>Rhabditina</taxon>
        <taxon>Rhabditomorpha</taxon>
        <taxon>Rhabditoidea</taxon>
        <taxon>Rhabditidae</taxon>
        <taxon>Peloderinae</taxon>
        <taxon>Caenorhabditis</taxon>
    </lineage>
</organism>
<keyword id="KW-1017">Isopeptide bond</keyword>
<keyword id="KW-0444">Lipid biosynthesis</keyword>
<keyword id="KW-0443">Lipid metabolism</keyword>
<keyword id="KW-1185">Reference proteome</keyword>
<keyword id="KW-0752">Steroid biosynthesis</keyword>
<keyword id="KW-0753">Steroid metabolism</keyword>
<keyword id="KW-0756">Sterol biosynthesis</keyword>
<keyword id="KW-1207">Sterol metabolism</keyword>
<keyword id="KW-0808">Transferase</keyword>
<keyword id="KW-0832">Ubl conjugation</keyword>
<evidence type="ECO:0000250" key="1">
    <source>
        <dbReference type="UniProtKB" id="P54868"/>
    </source>
</evidence>
<evidence type="ECO:0000250" key="2">
    <source>
        <dbReference type="UniProtKB" id="P54869"/>
    </source>
</evidence>
<evidence type="ECO:0000255" key="3">
    <source>
        <dbReference type="PROSITE-ProRule" id="PRU10116"/>
    </source>
</evidence>
<evidence type="ECO:0000269" key="4">
    <source>
    </source>
</evidence>
<evidence type="ECO:0000305" key="5"/>
<evidence type="ECO:0000312" key="6">
    <source>
        <dbReference type="WormBase" id="F25B4.6"/>
    </source>
</evidence>
<comment type="function">
    <text evidence="2">This enzyme condenses acetyl-CoA with acetoacetyl-CoA to form HMG-CoA, which is the substrate for HMG-CoA reductase.</text>
</comment>
<comment type="catalytic activity">
    <reaction evidence="3">
        <text>acetoacetyl-CoA + acetyl-CoA + H2O = (3S)-3-hydroxy-3-methylglutaryl-CoA + CoA + H(+)</text>
        <dbReference type="Rhea" id="RHEA:10188"/>
        <dbReference type="ChEBI" id="CHEBI:15377"/>
        <dbReference type="ChEBI" id="CHEBI:15378"/>
        <dbReference type="ChEBI" id="CHEBI:43074"/>
        <dbReference type="ChEBI" id="CHEBI:57286"/>
        <dbReference type="ChEBI" id="CHEBI:57287"/>
        <dbReference type="ChEBI" id="CHEBI:57288"/>
        <dbReference type="EC" id="2.3.3.10"/>
    </reaction>
</comment>
<comment type="pathway">
    <text>Metabolic intermediate biosynthesis; (R)-mevalonate biosynthesis; (R)-mevalonate from acetyl-CoA: step 2/3.</text>
</comment>
<comment type="PTM">
    <text evidence="4">Ubiquitinated.</text>
</comment>
<comment type="disruption phenotype">
    <text evidence="4">RNAi-mediated knockdown results in sterility, slow development, reduced body size, severe paralysis and reduced pharyngeal pumping.</text>
</comment>
<comment type="similarity">
    <text evidence="5">Belongs to the thiolase-like superfamily. HMG-CoA synthase family.</text>
</comment>
<name>HMCS_CAEEL</name>
<sequence length="462" mass="51416">MSLGQLSYTPVTDVGIGAIELYFPQNFVDQNDLEKFNNVSSGKYTIGLGQQQMGFCSDNEDIVSISLTVTRKLIETYKISTDSIGCLVVGTETMIDKSKSVKTALMDLFPGNSDIEGVDIKNACFGGAQALLHAIDWVTVNHPLDKKNAIVVVADIAIYEEGPARCTGGAGAIAFLICPDASIPIDRQFSACHMKNTWDFFKPITPIPSEYPVVDGSLSLSSYLEAVRMTYTYFISKVNRHTTGIDGLNSFDGVFLHSPFTKMVQKGLAVMNYTDSQLRHKQLNGNGVDHKLDENDRAGLAKMIELSAQVWKEKTDPYLVFNRRIGNMYTPSLFAQLLAYLAADDCVTGEKSILFFAYGSGLASAIFPGRVRQTSNLDKIRQVAIRAIKRLDDRIQFTPEEFTETLQKREVFLRSKEIPKSPSETSLFPNTYFLDNMDKLYRRSYTLHEEPNGVQNGNGIHH</sequence>
<protein>
    <recommendedName>
        <fullName>Hydroxymethylglutaryl-CoA synthase</fullName>
        <shortName>HMG-CoA synthase</shortName>
        <ecNumber>2.3.3.10</ecNumber>
    </recommendedName>
    <alternativeName>
        <fullName>3-hydroxy-3-methylglutaryl coenzyme A synthase</fullName>
    </alternativeName>
</protein>
<feature type="chain" id="PRO_0000213754" description="Hydroxymethylglutaryl-CoA synthase">
    <location>
        <begin position="1"/>
        <end position="462"/>
    </location>
</feature>
<feature type="active site" description="Proton donor/acceptor" evidence="3">
    <location>
        <position position="92"/>
    </location>
</feature>
<feature type="active site" description="Acyl-thioester intermediate" evidence="3">
    <location>
        <position position="124"/>
    </location>
</feature>
<feature type="active site" description="Proton donor/acceptor" evidence="3">
    <location>
        <position position="257"/>
    </location>
</feature>
<feature type="binding site" evidence="1">
    <location>
        <position position="124"/>
    </location>
    <ligand>
        <name>(3S)-3-hydroxy-3-methylglutaryl-CoA</name>
        <dbReference type="ChEBI" id="CHEBI:43074"/>
    </ligand>
</feature>
<feature type="binding site" evidence="1">
    <location>
        <position position="167"/>
    </location>
    <ligand>
        <name>(3S)-3-hydroxy-3-methylglutaryl-CoA</name>
        <dbReference type="ChEBI" id="CHEBI:43074"/>
    </ligand>
</feature>
<feature type="binding site" evidence="1">
    <location>
        <position position="219"/>
    </location>
    <ligand>
        <name>(3S)-3-hydroxy-3-methylglutaryl-CoA</name>
        <dbReference type="ChEBI" id="CHEBI:43074"/>
    </ligand>
</feature>
<feature type="binding site" evidence="1">
    <location>
        <position position="257"/>
    </location>
    <ligand>
        <name>(3S)-3-hydroxy-3-methylglutaryl-CoA</name>
        <dbReference type="ChEBI" id="CHEBI:43074"/>
    </ligand>
</feature>
<feature type="binding site" evidence="1">
    <location>
        <position position="266"/>
    </location>
    <ligand>
        <name>(3S)-3-hydroxy-3-methylglutaryl-CoA</name>
        <dbReference type="ChEBI" id="CHEBI:43074"/>
    </ligand>
</feature>
<feature type="binding site" evidence="1">
    <location>
        <position position="327"/>
    </location>
    <ligand>
        <name>(3S)-3-hydroxy-3-methylglutaryl-CoA</name>
        <dbReference type="ChEBI" id="CHEBI:43074"/>
    </ligand>
</feature>
<feature type="binding site" evidence="1">
    <location>
        <position position="360"/>
    </location>
    <ligand>
        <name>(3S)-3-hydroxy-3-methylglutaryl-CoA</name>
        <dbReference type="ChEBI" id="CHEBI:43074"/>
    </ligand>
</feature>
<feature type="cross-link" description="Glycyl lysine isopeptide (Lys-Gly) (interchain with G-Cter in SUMO)" evidence="4">
    <location>
        <position position="408"/>
    </location>
</feature>
<feature type="mutagenesis site" description="Reduced sumoylation; when associated with R-314, R-408 and R-420." evidence="4">
    <original>K</original>
    <variation>R</variation>
    <location>
        <position position="291"/>
    </location>
</feature>
<feature type="mutagenesis site" description="Reduced sumoylation; when associated with R-291, R-408 and R-420." evidence="4">
    <original>K</original>
    <variation>R</variation>
    <location>
        <position position="314"/>
    </location>
</feature>
<feature type="mutagenesis site" description="Reduced sumoylation." evidence="4">
    <original>K</original>
    <variation>R</variation>
    <location>
        <position position="408"/>
    </location>
</feature>
<feature type="mutagenesis site" description="Reduced sumoylation; when associated with R-291, R-314 and R-408." evidence="4">
    <original>K</original>
    <variation>R</variation>
    <location>
        <position position="420"/>
    </location>
</feature>
<proteinExistence type="evidence at protein level"/>
<dbReference type="EC" id="2.3.3.10"/>
<dbReference type="EMBL" id="FO080538">
    <property type="protein sequence ID" value="CCD64508.1"/>
    <property type="molecule type" value="Genomic_DNA"/>
</dbReference>
<dbReference type="EMBL" id="U12787">
    <property type="protein sequence ID" value="AAA92672.1"/>
    <property type="molecule type" value="mRNA"/>
</dbReference>
<dbReference type="PIR" id="T25726">
    <property type="entry name" value="T25726"/>
</dbReference>
<dbReference type="RefSeq" id="NP_504496.1">
    <property type="nucleotide sequence ID" value="NM_072095.4"/>
</dbReference>
<dbReference type="SMR" id="P54871"/>
<dbReference type="BioGRID" id="44005">
    <property type="interactions" value="9"/>
</dbReference>
<dbReference type="FunCoup" id="P54871">
    <property type="interactions" value="2121"/>
</dbReference>
<dbReference type="IntAct" id="P54871">
    <property type="interactions" value="1"/>
</dbReference>
<dbReference type="STRING" id="6239.F25B4.6.1"/>
<dbReference type="PaxDb" id="6239-F25B4.6"/>
<dbReference type="PeptideAtlas" id="P54871"/>
<dbReference type="EnsemblMetazoa" id="F25B4.6.1">
    <property type="protein sequence ID" value="F25B4.6.1"/>
    <property type="gene ID" value="WBGene00017769"/>
</dbReference>
<dbReference type="GeneID" id="178956"/>
<dbReference type="KEGG" id="cel:CELE_F25B4.6"/>
<dbReference type="UCSC" id="F25B4.6">
    <property type="organism name" value="c. elegans"/>
</dbReference>
<dbReference type="AGR" id="WB:WBGene00017769"/>
<dbReference type="CTD" id="178956"/>
<dbReference type="WormBase" id="F25B4.6">
    <property type="protein sequence ID" value="CE09624"/>
    <property type="gene ID" value="WBGene00017769"/>
    <property type="gene designation" value="hmgs-1"/>
</dbReference>
<dbReference type="eggNOG" id="KOG1393">
    <property type="taxonomic scope" value="Eukaryota"/>
</dbReference>
<dbReference type="GeneTree" id="ENSGT00390000006096"/>
<dbReference type="HOGENOM" id="CLU_008065_0_1_1"/>
<dbReference type="InParanoid" id="P54871"/>
<dbReference type="OMA" id="DDAYNWI"/>
<dbReference type="OrthoDB" id="1269963at2759"/>
<dbReference type="PhylomeDB" id="P54871"/>
<dbReference type="BRENDA" id="2.3.3.10">
    <property type="organism ID" value="1045"/>
</dbReference>
<dbReference type="Reactome" id="R-CEL-191273">
    <property type="pathway name" value="Cholesterol biosynthesis"/>
</dbReference>
<dbReference type="Reactome" id="R-CEL-77111">
    <property type="pathway name" value="Synthesis of Ketone Bodies"/>
</dbReference>
<dbReference type="Reactome" id="R-CEL-9837999">
    <property type="pathway name" value="Mitochondrial protein degradation"/>
</dbReference>
<dbReference type="UniPathway" id="UPA00058">
    <property type="reaction ID" value="UER00102"/>
</dbReference>
<dbReference type="PRO" id="PR:P54871"/>
<dbReference type="Proteomes" id="UP000001940">
    <property type="component" value="Chromosome V"/>
</dbReference>
<dbReference type="Bgee" id="WBGene00017769">
    <property type="expression patterns" value="Expressed in pharyngeal muscle cell (C elegans) and 4 other cell types or tissues"/>
</dbReference>
<dbReference type="GO" id="GO:0004421">
    <property type="term" value="F:hydroxymethylglutaryl-CoA synthase activity"/>
    <property type="evidence" value="ECO:0000318"/>
    <property type="project" value="GO_Central"/>
</dbReference>
<dbReference type="GO" id="GO:0006084">
    <property type="term" value="P:acetyl-CoA metabolic process"/>
    <property type="evidence" value="ECO:0000318"/>
    <property type="project" value="GO_Central"/>
</dbReference>
<dbReference type="GO" id="GO:0010142">
    <property type="term" value="P:farnesyl diphosphate biosynthetic process, mevalonate pathway"/>
    <property type="evidence" value="ECO:0000318"/>
    <property type="project" value="GO_Central"/>
</dbReference>
<dbReference type="GO" id="GO:0016126">
    <property type="term" value="P:sterol biosynthetic process"/>
    <property type="evidence" value="ECO:0007669"/>
    <property type="project" value="UniProtKB-KW"/>
</dbReference>
<dbReference type="CDD" id="cd00827">
    <property type="entry name" value="init_cond_enzymes"/>
    <property type="match status" value="1"/>
</dbReference>
<dbReference type="FunFam" id="3.40.47.10:FF:000008">
    <property type="entry name" value="3-hydroxy-3-methylglutaryl coenzyme A synthase"/>
    <property type="match status" value="1"/>
</dbReference>
<dbReference type="Gene3D" id="3.40.47.10">
    <property type="match status" value="1"/>
</dbReference>
<dbReference type="InterPro" id="IPR000590">
    <property type="entry name" value="HMG_CoA_synt_AS"/>
</dbReference>
<dbReference type="InterPro" id="IPR013746">
    <property type="entry name" value="HMG_CoA_synt_C_dom"/>
</dbReference>
<dbReference type="InterPro" id="IPR013528">
    <property type="entry name" value="HMG_CoA_synth_N"/>
</dbReference>
<dbReference type="InterPro" id="IPR010122">
    <property type="entry name" value="HMG_CoA_synthase_euk"/>
</dbReference>
<dbReference type="InterPro" id="IPR016039">
    <property type="entry name" value="Thiolase-like"/>
</dbReference>
<dbReference type="NCBIfam" id="TIGR01833">
    <property type="entry name" value="HMG-CoA-S_euk"/>
    <property type="match status" value="1"/>
</dbReference>
<dbReference type="PANTHER" id="PTHR43323">
    <property type="entry name" value="3-HYDROXY-3-METHYLGLUTARYL COENZYME A SYNTHASE"/>
    <property type="match status" value="1"/>
</dbReference>
<dbReference type="PANTHER" id="PTHR43323:SF2">
    <property type="entry name" value="HYDROXYMETHYLGLUTARYL-COA SYNTHASE"/>
    <property type="match status" value="1"/>
</dbReference>
<dbReference type="Pfam" id="PF08540">
    <property type="entry name" value="HMG_CoA_synt_C"/>
    <property type="match status" value="1"/>
</dbReference>
<dbReference type="Pfam" id="PF01154">
    <property type="entry name" value="HMG_CoA_synt_N"/>
    <property type="match status" value="1"/>
</dbReference>
<dbReference type="SUPFAM" id="SSF53901">
    <property type="entry name" value="Thiolase-like"/>
    <property type="match status" value="2"/>
</dbReference>
<dbReference type="PROSITE" id="PS01226">
    <property type="entry name" value="HMG_COA_SYNTHASE"/>
    <property type="match status" value="1"/>
</dbReference>